<comment type="function">
    <text evidence="1">Transfers an acetyl group from acetyl-CoA to L-homoserine, forming acetyl-L-homoserine.</text>
</comment>
<comment type="catalytic activity">
    <reaction evidence="1">
        <text>L-homoserine + acetyl-CoA = O-acetyl-L-homoserine + CoA</text>
        <dbReference type="Rhea" id="RHEA:13701"/>
        <dbReference type="ChEBI" id="CHEBI:57287"/>
        <dbReference type="ChEBI" id="CHEBI:57288"/>
        <dbReference type="ChEBI" id="CHEBI:57476"/>
        <dbReference type="ChEBI" id="CHEBI:57716"/>
        <dbReference type="EC" id="2.3.1.31"/>
    </reaction>
</comment>
<comment type="pathway">
    <text evidence="1">Amino-acid biosynthesis; L-methionine biosynthesis via de novo pathway; O-acetyl-L-homoserine from L-homoserine: step 1/1.</text>
</comment>
<comment type="subcellular location">
    <subcellularLocation>
        <location evidence="1">Cytoplasm</location>
    </subcellularLocation>
</comment>
<comment type="similarity">
    <text evidence="1">Belongs to the MetA family.</text>
</comment>
<keyword id="KW-0012">Acyltransferase</keyword>
<keyword id="KW-0028">Amino-acid biosynthesis</keyword>
<keyword id="KW-0963">Cytoplasm</keyword>
<keyword id="KW-0486">Methionine biosynthesis</keyword>
<keyword id="KW-0808">Transferase</keyword>
<sequence length="301" mass="35249">MPIIIDKDLPARKVLQEENIFVMTKERAETQDIRALKIAILNLMPTKQETEAQLLRLIGNTPLQLDVHLLHMESHLSRNVAQEHLTSFYKTFRDIENEKFDGLIITGAPVETLSFEEVDYWEELKRIMEYSKTNVTSTLHICWGAQAGLYHHYGVQKYPLKEKMFGVFEHEVREQHVKLLQGFDELFFAPHSRHTEVRESDIRGVKELTLLANSEEAGVHLVIGPEGRQVFALGHSEYSCDTLKQEYERDRQKGLNIDVPKNYFKHNNPNEKPLVRWRSHGNLLFSNWLNYYVYQETPYVL</sequence>
<reference key="1">
    <citation type="journal article" date="2006" name="J. Bacteriol.">
        <title>Pathogenomic sequence analysis of Bacillus cereus and Bacillus thuringiensis isolates closely related to Bacillus anthracis.</title>
        <authorList>
            <person name="Han C.S."/>
            <person name="Xie G."/>
            <person name="Challacombe J.F."/>
            <person name="Altherr M.R."/>
            <person name="Bhotika S.S."/>
            <person name="Bruce D."/>
            <person name="Campbell C.S."/>
            <person name="Campbell M.L."/>
            <person name="Chen J."/>
            <person name="Chertkov O."/>
            <person name="Cleland C."/>
            <person name="Dimitrijevic M."/>
            <person name="Doggett N.A."/>
            <person name="Fawcett J.J."/>
            <person name="Glavina T."/>
            <person name="Goodwin L.A."/>
            <person name="Hill K.K."/>
            <person name="Hitchcock P."/>
            <person name="Jackson P.J."/>
            <person name="Keim P."/>
            <person name="Kewalramani A.R."/>
            <person name="Longmire J."/>
            <person name="Lucas S."/>
            <person name="Malfatti S."/>
            <person name="McMurry K."/>
            <person name="Meincke L.J."/>
            <person name="Misra M."/>
            <person name="Moseman B.L."/>
            <person name="Mundt M."/>
            <person name="Munk A.C."/>
            <person name="Okinaka R.T."/>
            <person name="Parson-Quintana B."/>
            <person name="Reilly L.P."/>
            <person name="Richardson P."/>
            <person name="Robinson D.L."/>
            <person name="Rubin E."/>
            <person name="Saunders E."/>
            <person name="Tapia R."/>
            <person name="Tesmer J.G."/>
            <person name="Thayer N."/>
            <person name="Thompson L.S."/>
            <person name="Tice H."/>
            <person name="Ticknor L.O."/>
            <person name="Wills P.L."/>
            <person name="Brettin T.S."/>
            <person name="Gilna P."/>
        </authorList>
    </citation>
    <scope>NUCLEOTIDE SEQUENCE [LARGE SCALE GENOMIC DNA]</scope>
    <source>
        <strain>97-27</strain>
    </source>
</reference>
<gene>
    <name evidence="1" type="primary">metAA</name>
    <name type="ordered locus">BT9727_5086</name>
</gene>
<protein>
    <recommendedName>
        <fullName evidence="1">Homoserine O-acetyltransferase</fullName>
        <shortName evidence="1">HAT</shortName>
        <ecNumber evidence="1">2.3.1.31</ecNumber>
    </recommendedName>
    <alternativeName>
        <fullName evidence="1">Homoserine transacetylase</fullName>
        <shortName evidence="1">HTA</shortName>
    </alternativeName>
</protein>
<accession>Q6HAN0</accession>
<dbReference type="EC" id="2.3.1.31" evidence="1"/>
<dbReference type="EMBL" id="AE017355">
    <property type="protein sequence ID" value="AAT62646.1"/>
    <property type="molecule type" value="Genomic_DNA"/>
</dbReference>
<dbReference type="RefSeq" id="YP_039396.1">
    <property type="nucleotide sequence ID" value="NC_005957.1"/>
</dbReference>
<dbReference type="SMR" id="Q6HAN0"/>
<dbReference type="KEGG" id="btk:BT9727_5086"/>
<dbReference type="PATRIC" id="fig|281309.8.peg.5411"/>
<dbReference type="HOGENOM" id="CLU_057851_0_1_9"/>
<dbReference type="UniPathway" id="UPA00051">
    <property type="reaction ID" value="UER00074"/>
</dbReference>
<dbReference type="Proteomes" id="UP000001301">
    <property type="component" value="Chromosome"/>
</dbReference>
<dbReference type="GO" id="GO:0005737">
    <property type="term" value="C:cytoplasm"/>
    <property type="evidence" value="ECO:0007669"/>
    <property type="project" value="UniProtKB-SubCell"/>
</dbReference>
<dbReference type="GO" id="GO:0004414">
    <property type="term" value="F:homoserine O-acetyltransferase activity"/>
    <property type="evidence" value="ECO:0007669"/>
    <property type="project" value="UniProtKB-EC"/>
</dbReference>
<dbReference type="GO" id="GO:0008899">
    <property type="term" value="F:homoserine O-succinyltransferase activity"/>
    <property type="evidence" value="ECO:0007669"/>
    <property type="project" value="UniProtKB-UniRule"/>
</dbReference>
<dbReference type="GO" id="GO:0019281">
    <property type="term" value="P:L-methionine biosynthetic process from homoserine via O-succinyl-L-homoserine and cystathionine"/>
    <property type="evidence" value="ECO:0007669"/>
    <property type="project" value="InterPro"/>
</dbReference>
<dbReference type="CDD" id="cd03131">
    <property type="entry name" value="GATase1_HTS"/>
    <property type="match status" value="1"/>
</dbReference>
<dbReference type="FunFam" id="3.40.50.880:FF:000004">
    <property type="entry name" value="Homoserine O-succinyltransferase"/>
    <property type="match status" value="1"/>
</dbReference>
<dbReference type="Gene3D" id="3.40.50.880">
    <property type="match status" value="1"/>
</dbReference>
<dbReference type="HAMAP" id="MF_00295">
    <property type="entry name" value="MetA_acyltransf"/>
    <property type="match status" value="1"/>
</dbReference>
<dbReference type="InterPro" id="IPR029062">
    <property type="entry name" value="Class_I_gatase-like"/>
</dbReference>
<dbReference type="InterPro" id="IPR005697">
    <property type="entry name" value="HST_MetA"/>
</dbReference>
<dbReference type="InterPro" id="IPR033752">
    <property type="entry name" value="MetA_family"/>
</dbReference>
<dbReference type="NCBIfam" id="TIGR01001">
    <property type="entry name" value="metA"/>
    <property type="match status" value="1"/>
</dbReference>
<dbReference type="PANTHER" id="PTHR20919">
    <property type="entry name" value="HOMOSERINE O-SUCCINYLTRANSFERASE"/>
    <property type="match status" value="1"/>
</dbReference>
<dbReference type="PANTHER" id="PTHR20919:SF0">
    <property type="entry name" value="HOMOSERINE O-SUCCINYLTRANSFERASE"/>
    <property type="match status" value="1"/>
</dbReference>
<dbReference type="Pfam" id="PF04204">
    <property type="entry name" value="HTS"/>
    <property type="match status" value="1"/>
</dbReference>
<dbReference type="PIRSF" id="PIRSF000450">
    <property type="entry name" value="H_ser_succinyltr"/>
    <property type="match status" value="1"/>
</dbReference>
<dbReference type="SUPFAM" id="SSF52317">
    <property type="entry name" value="Class I glutamine amidotransferase-like"/>
    <property type="match status" value="1"/>
</dbReference>
<name>METAA_BACHK</name>
<organism>
    <name type="scientific">Bacillus thuringiensis subsp. konkukian (strain 97-27)</name>
    <dbReference type="NCBI Taxonomy" id="281309"/>
    <lineage>
        <taxon>Bacteria</taxon>
        <taxon>Bacillati</taxon>
        <taxon>Bacillota</taxon>
        <taxon>Bacilli</taxon>
        <taxon>Bacillales</taxon>
        <taxon>Bacillaceae</taxon>
        <taxon>Bacillus</taxon>
        <taxon>Bacillus cereus group</taxon>
    </lineage>
</organism>
<feature type="chain" id="PRO_0000199740" description="Homoserine O-acetyltransferase">
    <location>
        <begin position="1"/>
        <end position="301"/>
    </location>
</feature>
<feature type="active site" description="Acyl-thioester intermediate" evidence="1">
    <location>
        <position position="142"/>
    </location>
</feature>
<feature type="active site" description="Proton acceptor" evidence="1">
    <location>
        <position position="235"/>
    </location>
</feature>
<feature type="active site" evidence="1">
    <location>
        <position position="237"/>
    </location>
</feature>
<feature type="binding site" evidence="1">
    <location>
        <position position="163"/>
    </location>
    <ligand>
        <name>substrate</name>
    </ligand>
</feature>
<feature type="binding site" evidence="1">
    <location>
        <position position="192"/>
    </location>
    <ligand>
        <name>substrate</name>
    </ligand>
</feature>
<feature type="binding site" evidence="1">
    <location>
        <position position="249"/>
    </location>
    <ligand>
        <name>substrate</name>
    </ligand>
</feature>
<feature type="site" description="Important for acyl-CoA specificity" evidence="1">
    <location>
        <position position="111"/>
    </location>
</feature>
<feature type="site" description="Important for substrate specificity" evidence="1">
    <location>
        <position position="192"/>
    </location>
</feature>
<proteinExistence type="inferred from homology"/>
<evidence type="ECO:0000255" key="1">
    <source>
        <dbReference type="HAMAP-Rule" id="MF_00295"/>
    </source>
</evidence>